<evidence type="ECO:0000250" key="1">
    <source>
        <dbReference type="UniProtKB" id="P28221"/>
    </source>
</evidence>
<evidence type="ECO:0000250" key="2">
    <source>
        <dbReference type="UniProtKB" id="P41595"/>
    </source>
</evidence>
<evidence type="ECO:0000255" key="3"/>
<evidence type="ECO:0000255" key="4">
    <source>
        <dbReference type="PROSITE-ProRule" id="PRU00521"/>
    </source>
</evidence>
<evidence type="ECO:0000269" key="5">
    <source>
    </source>
</evidence>
<evidence type="ECO:0000269" key="6">
    <source>
    </source>
</evidence>
<dbReference type="EMBL" id="M89953">
    <property type="protein sequence ID" value="AAA40614.1"/>
    <property type="molecule type" value="Genomic_DNA"/>
</dbReference>
<dbReference type="PIR" id="I77467">
    <property type="entry name" value="I77467"/>
</dbReference>
<dbReference type="RefSeq" id="NP_036984.1">
    <property type="nucleotide sequence ID" value="NM_012852.2"/>
</dbReference>
<dbReference type="RefSeq" id="XP_008762430.1">
    <property type="nucleotide sequence ID" value="XM_008764208.2"/>
</dbReference>
<dbReference type="RefSeq" id="XP_017448642.1">
    <property type="nucleotide sequence ID" value="XM_017593153.1"/>
</dbReference>
<dbReference type="RefSeq" id="XP_017448643.1">
    <property type="nucleotide sequence ID" value="XM_017593154.1"/>
</dbReference>
<dbReference type="RefSeq" id="XP_017448644.1">
    <property type="nucleotide sequence ID" value="XM_017593155.1"/>
</dbReference>
<dbReference type="RefSeq" id="XP_017448645.1">
    <property type="nucleotide sequence ID" value="XM_017593156.1"/>
</dbReference>
<dbReference type="RefSeq" id="XP_017448646.1">
    <property type="nucleotide sequence ID" value="XM_017593157.1"/>
</dbReference>
<dbReference type="RefSeq" id="XP_017448647.1">
    <property type="nucleotide sequence ID" value="XM_017593158.1"/>
</dbReference>
<dbReference type="SMR" id="P28565"/>
<dbReference type="FunCoup" id="P28565">
    <property type="interactions" value="184"/>
</dbReference>
<dbReference type="STRING" id="10116.ENSRNOP00000016047"/>
<dbReference type="BindingDB" id="P28565"/>
<dbReference type="ChEMBL" id="CHEMBL5450"/>
<dbReference type="DrugCentral" id="P28565"/>
<dbReference type="GuidetoPHARMACOLOGY" id="3"/>
<dbReference type="GlyCosmos" id="P28565">
    <property type="glycosylation" value="3 sites, No reported glycans"/>
</dbReference>
<dbReference type="GlyGen" id="P28565">
    <property type="glycosylation" value="3 sites"/>
</dbReference>
<dbReference type="PhosphoSitePlus" id="P28565"/>
<dbReference type="PaxDb" id="10116-ENSRNOP00000016047"/>
<dbReference type="Ensembl" id="ENSRNOT00000016046.3">
    <property type="protein sequence ID" value="ENSRNOP00000016047.1"/>
    <property type="gene ID" value="ENSRNOG00000012038.3"/>
</dbReference>
<dbReference type="GeneID" id="25323"/>
<dbReference type="KEGG" id="rno:25323"/>
<dbReference type="UCSC" id="RGD:2847">
    <property type="organism name" value="rat"/>
</dbReference>
<dbReference type="AGR" id="RGD:2847"/>
<dbReference type="CTD" id="3352"/>
<dbReference type="RGD" id="2847">
    <property type="gene designation" value="Htr1d"/>
</dbReference>
<dbReference type="eggNOG" id="KOG3656">
    <property type="taxonomic scope" value="Eukaryota"/>
</dbReference>
<dbReference type="GeneTree" id="ENSGT01010000222287"/>
<dbReference type="HOGENOM" id="CLU_009579_11_1_1"/>
<dbReference type="InParanoid" id="P28565"/>
<dbReference type="OMA" id="VWMISIS"/>
<dbReference type="OrthoDB" id="5956310at2759"/>
<dbReference type="PhylomeDB" id="P28565"/>
<dbReference type="TreeFam" id="TF316350"/>
<dbReference type="Reactome" id="R-RNO-390666">
    <property type="pathway name" value="Serotonin receptors"/>
</dbReference>
<dbReference type="Reactome" id="R-RNO-418594">
    <property type="pathway name" value="G alpha (i) signalling events"/>
</dbReference>
<dbReference type="PRO" id="PR:P28565"/>
<dbReference type="Proteomes" id="UP000002494">
    <property type="component" value="Chromosome 5"/>
</dbReference>
<dbReference type="Bgee" id="ENSRNOG00000012038">
    <property type="expression patterns" value="Expressed in brain and 2 other cell types or tissues"/>
</dbReference>
<dbReference type="GO" id="GO:0030425">
    <property type="term" value="C:dendrite"/>
    <property type="evidence" value="ECO:0000318"/>
    <property type="project" value="GO_Central"/>
</dbReference>
<dbReference type="GO" id="GO:0098978">
    <property type="term" value="C:glutamatergic synapse"/>
    <property type="evidence" value="ECO:0000314"/>
    <property type="project" value="SynGO"/>
</dbReference>
<dbReference type="GO" id="GO:0098992">
    <property type="term" value="C:neuronal dense core vesicle"/>
    <property type="evidence" value="ECO:0000314"/>
    <property type="project" value="SynGO"/>
</dbReference>
<dbReference type="GO" id="GO:0005886">
    <property type="term" value="C:plasma membrane"/>
    <property type="evidence" value="ECO:0000250"/>
    <property type="project" value="UniProtKB"/>
</dbReference>
<dbReference type="GO" id="GO:0004993">
    <property type="term" value="F:G protein-coupled serotonin receptor activity"/>
    <property type="evidence" value="ECO:0000250"/>
    <property type="project" value="UniProtKB"/>
</dbReference>
<dbReference type="GO" id="GO:0001586">
    <property type="term" value="F:Gi/o-coupled serotonin receptor activity"/>
    <property type="evidence" value="ECO:0000266"/>
    <property type="project" value="RGD"/>
</dbReference>
<dbReference type="GO" id="GO:0030594">
    <property type="term" value="F:neurotransmitter receptor activity"/>
    <property type="evidence" value="ECO:0000318"/>
    <property type="project" value="GO_Central"/>
</dbReference>
<dbReference type="GO" id="GO:0051378">
    <property type="term" value="F:serotonin binding"/>
    <property type="evidence" value="ECO:0000266"/>
    <property type="project" value="RGD"/>
</dbReference>
<dbReference type="GO" id="GO:0099589">
    <property type="term" value="F:serotonin receptor activity"/>
    <property type="evidence" value="ECO:0000266"/>
    <property type="project" value="RGD"/>
</dbReference>
<dbReference type="GO" id="GO:0007193">
    <property type="term" value="P:adenylate cyclase-inhibiting G protein-coupled receptor signaling pathway"/>
    <property type="evidence" value="ECO:0000250"/>
    <property type="project" value="UniProtKB"/>
</dbReference>
<dbReference type="GO" id="GO:0007198">
    <property type="term" value="P:adenylate cyclase-inhibiting serotonin receptor signaling pathway"/>
    <property type="evidence" value="ECO:0000266"/>
    <property type="project" value="RGD"/>
</dbReference>
<dbReference type="GO" id="GO:0007268">
    <property type="term" value="P:chemical synaptic transmission"/>
    <property type="evidence" value="ECO:0000318"/>
    <property type="project" value="GO_Central"/>
</dbReference>
<dbReference type="GO" id="GO:0007187">
    <property type="term" value="P:G protein-coupled receptor signaling pathway, coupled to cyclic nucleotide second messenger"/>
    <property type="evidence" value="ECO:0000318"/>
    <property type="project" value="GO_Central"/>
</dbReference>
<dbReference type="GO" id="GO:0014827">
    <property type="term" value="P:intestine smooth muscle contraction"/>
    <property type="evidence" value="ECO:0000266"/>
    <property type="project" value="RGD"/>
</dbReference>
<dbReference type="GO" id="GO:0050795">
    <property type="term" value="P:regulation of behavior"/>
    <property type="evidence" value="ECO:0007669"/>
    <property type="project" value="InterPro"/>
</dbReference>
<dbReference type="GO" id="GO:0040012">
    <property type="term" value="P:regulation of locomotion"/>
    <property type="evidence" value="ECO:0007669"/>
    <property type="project" value="InterPro"/>
</dbReference>
<dbReference type="GO" id="GO:2000300">
    <property type="term" value="P:regulation of synaptic vesicle exocytosis"/>
    <property type="evidence" value="ECO:0000314"/>
    <property type="project" value="SynGO"/>
</dbReference>
<dbReference type="GO" id="GO:0009636">
    <property type="term" value="P:response to toxic substance"/>
    <property type="evidence" value="ECO:0000266"/>
    <property type="project" value="RGD"/>
</dbReference>
<dbReference type="GO" id="GO:0042310">
    <property type="term" value="P:vasoconstriction"/>
    <property type="evidence" value="ECO:0007669"/>
    <property type="project" value="InterPro"/>
</dbReference>
<dbReference type="CDD" id="cd15333">
    <property type="entry name" value="7tmA_5-HT1B_1D"/>
    <property type="match status" value="1"/>
</dbReference>
<dbReference type="Gene3D" id="1.20.1070.10">
    <property type="entry name" value="Rhodopsin 7-helix transmembrane proteins"/>
    <property type="match status" value="1"/>
</dbReference>
<dbReference type="InterPro" id="IPR000505">
    <property type="entry name" value="5HT1D_rcpt"/>
</dbReference>
<dbReference type="InterPro" id="IPR002231">
    <property type="entry name" value="5HT_rcpt"/>
</dbReference>
<dbReference type="InterPro" id="IPR000276">
    <property type="entry name" value="GPCR_Rhodpsn"/>
</dbReference>
<dbReference type="InterPro" id="IPR017452">
    <property type="entry name" value="GPCR_Rhodpsn_7TM"/>
</dbReference>
<dbReference type="PANTHER" id="PTHR24248:SF196">
    <property type="entry name" value="5-HYDROXYTRYPTAMINE RECEPTOR 1D"/>
    <property type="match status" value="1"/>
</dbReference>
<dbReference type="PANTHER" id="PTHR24248">
    <property type="entry name" value="ADRENERGIC RECEPTOR-RELATED G-PROTEIN COUPLED RECEPTOR"/>
    <property type="match status" value="1"/>
</dbReference>
<dbReference type="Pfam" id="PF00001">
    <property type="entry name" value="7tm_1"/>
    <property type="match status" value="1"/>
</dbReference>
<dbReference type="PRINTS" id="PR00514">
    <property type="entry name" value="5HT1DRECEPTR"/>
</dbReference>
<dbReference type="PRINTS" id="PR01101">
    <property type="entry name" value="5HTRECEPTOR"/>
</dbReference>
<dbReference type="PRINTS" id="PR00237">
    <property type="entry name" value="GPCRRHODOPSN"/>
</dbReference>
<dbReference type="SMART" id="SM01381">
    <property type="entry name" value="7TM_GPCR_Srsx"/>
    <property type="match status" value="1"/>
</dbReference>
<dbReference type="SUPFAM" id="SSF81321">
    <property type="entry name" value="Family A G protein-coupled receptor-like"/>
    <property type="match status" value="1"/>
</dbReference>
<dbReference type="PROSITE" id="PS00237">
    <property type="entry name" value="G_PROTEIN_RECEP_F1_1"/>
    <property type="match status" value="1"/>
</dbReference>
<dbReference type="PROSITE" id="PS50262">
    <property type="entry name" value="G_PROTEIN_RECEP_F1_2"/>
    <property type="match status" value="1"/>
</dbReference>
<organism>
    <name type="scientific">Rattus norvegicus</name>
    <name type="common">Rat</name>
    <dbReference type="NCBI Taxonomy" id="10116"/>
    <lineage>
        <taxon>Eukaryota</taxon>
        <taxon>Metazoa</taxon>
        <taxon>Chordata</taxon>
        <taxon>Craniata</taxon>
        <taxon>Vertebrata</taxon>
        <taxon>Euteleostomi</taxon>
        <taxon>Mammalia</taxon>
        <taxon>Eutheria</taxon>
        <taxon>Euarchontoglires</taxon>
        <taxon>Glires</taxon>
        <taxon>Rodentia</taxon>
        <taxon>Myomorpha</taxon>
        <taxon>Muroidea</taxon>
        <taxon>Muridae</taxon>
        <taxon>Murinae</taxon>
        <taxon>Rattus</taxon>
    </lineage>
</organism>
<reference key="1">
    <citation type="journal article" date="1992" name="Mol. Cell. Neurosci.">
        <title>Distinct 5-HT1B and 5-HT1D serotonin receptors in rat: structural and pharmacological comparison of the two cloned receptors.</title>
        <authorList>
            <person name="Hamblin M.W."/>
            <person name="McGuffin R.W."/>
            <person name="Metcalf M.A."/>
            <person name="Dorsa D.M."/>
            <person name="Merchant K.M."/>
        </authorList>
    </citation>
    <scope>NUCLEOTIDE SEQUENCE [GENOMIC DNA]</scope>
    <scope>FUNCTION</scope>
    <scope>SUBCELLULAR LOCATION</scope>
    <scope>TISSUE SPECIFICITY</scope>
</reference>
<reference key="2">
    <citation type="journal article" date="1997" name="J. Neurochem.">
        <title>Sequence and functional analysis of cloned guinea pig and rat serotonin 5-HT1D receptors: common pharmacological features within the 5-HT1D receptor subfamily.</title>
        <authorList>
            <person name="Wurch T."/>
            <person name="Palmier C."/>
            <person name="Colpaert F.C."/>
            <person name="Pauwels P.J."/>
        </authorList>
    </citation>
    <scope>FUNCTION</scope>
    <scope>SUBCELLULAR LOCATION</scope>
</reference>
<protein>
    <recommendedName>
        <fullName>5-hydroxytryptamine receptor 1D</fullName>
        <shortName>5-HT-1D</shortName>
        <shortName>5-HT1D</shortName>
    </recommendedName>
    <alternativeName>
        <fullName>Serotonin receptor 1D</fullName>
    </alternativeName>
</protein>
<accession>P28565</accession>
<feature type="chain" id="PRO_0000068931" description="5-hydroxytryptamine receptor 1D">
    <location>
        <begin position="1"/>
        <end position="374"/>
    </location>
</feature>
<feature type="transmembrane region" description="Helical; Name=1" evidence="1">
    <location>
        <begin position="36"/>
        <end position="61"/>
    </location>
</feature>
<feature type="transmembrane region" description="Helical; Name=2" evidence="1">
    <location>
        <begin position="73"/>
        <end position="94"/>
    </location>
</feature>
<feature type="transmembrane region" description="Helical; Name=3" evidence="1">
    <location>
        <begin position="107"/>
        <end position="131"/>
    </location>
</feature>
<feature type="transmembrane region" description="Helical; Name=4" evidence="1">
    <location>
        <begin position="152"/>
        <end position="173"/>
    </location>
</feature>
<feature type="transmembrane region" description="Helical; Name=5" evidence="1">
    <location>
        <begin position="192"/>
        <end position="215"/>
    </location>
</feature>
<feature type="transmembrane region" description="Helical; Name=6" evidence="1">
    <location>
        <begin position="298"/>
        <end position="323"/>
    </location>
</feature>
<feature type="transmembrane region" description="Helical; Name=7" evidence="1">
    <location>
        <begin position="333"/>
        <end position="356"/>
    </location>
</feature>
<feature type="short sequence motif" description="DRY motif; important for ligand-induced conformation changes" evidence="2">
    <location>
        <begin position="132"/>
        <end position="134"/>
    </location>
</feature>
<feature type="short sequence motif" description="NPxxY motif; important for ligand-induced conformation changes and signaling" evidence="2">
    <location>
        <begin position="349"/>
        <end position="353"/>
    </location>
</feature>
<feature type="binding site" evidence="1">
    <location>
        <position position="115"/>
    </location>
    <ligand>
        <name>serotonin</name>
        <dbReference type="ChEBI" id="CHEBI:350546"/>
    </ligand>
</feature>
<feature type="binding site" evidence="1">
    <location>
        <position position="119"/>
    </location>
    <ligand>
        <name>serotonin</name>
        <dbReference type="ChEBI" id="CHEBI:350546"/>
    </ligand>
</feature>
<feature type="binding site" evidence="1">
    <location>
        <position position="318"/>
    </location>
    <ligand>
        <name>serotonin</name>
        <dbReference type="ChEBI" id="CHEBI:350546"/>
    </ligand>
</feature>
<feature type="glycosylation site" description="N-linked (GlcNAc...) asparagine" evidence="3">
    <location>
        <position position="5"/>
    </location>
</feature>
<feature type="glycosylation site" description="N-linked (GlcNAc...) asparagine" evidence="3">
    <location>
        <position position="17"/>
    </location>
</feature>
<feature type="glycosylation site" description="N-linked (GlcNAc...) asparagine" evidence="3">
    <location>
        <position position="21"/>
    </location>
</feature>
<feature type="disulfide bond" evidence="4">
    <location>
        <begin position="108"/>
        <end position="185"/>
    </location>
</feature>
<gene>
    <name type="primary">Htr1d</name>
</gene>
<comment type="function">
    <text evidence="1 5 6">G-protein coupled receptor for 5-hydroxytryptamine (serotonin) (PubMed:19912901, PubMed:8978753). Also functions as a receptor for ergot alkaloid derivatives, various anxiolytic and antidepressant drugs and other psychoactive substances (By similarity). Ligand binding causes a conformation change that triggers signaling via guanine nucleotide-binding proteins (G proteins) and modulates the activity of downstream effectors, such as adenylate cyclase (By similarity). HTR1D is coupled to G(i)/G(o) G alpha proteins and mediates inhibitory neurotransmission by inhibiting adenylate cyclase activity (By similarity). Regulates the release of 5-hydroxytryptamine in the brain, and thereby affects neural activity (By similarity). May also play a role in regulating the release of other neurotransmitters (By similarity). May play a role in vasoconstriction (By similarity).</text>
</comment>
<comment type="subunit">
    <text evidence="1">Homodimer. Heterodimer with HTR1B.</text>
</comment>
<comment type="subcellular location">
    <subcellularLocation>
        <location evidence="5 6">Cell membrane</location>
        <topology evidence="1">Multi-pass membrane protein</topology>
    </subcellularLocation>
</comment>
<comment type="tissue specificity">
    <text evidence="5">Detected in dorsal raphe.</text>
</comment>
<comment type="similarity">
    <text evidence="4">Belongs to the G-protein coupled receptor 1 family.</text>
</comment>
<keyword id="KW-1003">Cell membrane</keyword>
<keyword id="KW-1015">Disulfide bond</keyword>
<keyword id="KW-0297">G-protein coupled receptor</keyword>
<keyword id="KW-0325">Glycoprotein</keyword>
<keyword id="KW-0472">Membrane</keyword>
<keyword id="KW-0675">Receptor</keyword>
<keyword id="KW-1185">Reference proteome</keyword>
<keyword id="KW-0807">Transducer</keyword>
<keyword id="KW-0812">Transmembrane</keyword>
<keyword id="KW-1133">Transmembrane helix</keyword>
<name>5HT1D_RAT</name>
<proteinExistence type="evidence at transcript level"/>
<sequence>MSLPNQSLEGLPQEASNRSLNATGAWDPEVLQALRISLVVVLSIITLATVLSNAFVLTTILLTKKLHTPANYLIGSLATTDLLVSILVMPISIAYTTTRTWNFGQILCDIWVSSDITCCTASILHLCVIALDRYWAITDALEYSKRRTAGHAAAMIAAVWAISICISIPPLFWRQATAHEEMSDCLVNTSQISYTIYSTCGAFYIPSILLIILYGRIYVAARSRILNPPSLYGKRFTTAQLITGSAGSSLCSLNPSLHESHTHTVGSPLFFNQVKIKLADSILERKRISAARERKATKTLGIILGAFIICWLPFFVVSLVLPICRDSCWIHPALFDFFTWLGYLNSLINPVIYTVFNEDFRQAFQRVVHFRKAS</sequence>